<proteinExistence type="inferred from homology"/>
<accession>B7LWP5</accession>
<protein>
    <recommendedName>
        <fullName evidence="1">Enolase</fullName>
        <ecNumber evidence="1">4.2.1.11</ecNumber>
    </recommendedName>
    <alternativeName>
        <fullName evidence="1">2-phospho-D-glycerate hydro-lyase</fullName>
    </alternativeName>
    <alternativeName>
        <fullName evidence="1">2-phosphoglycerate dehydratase</fullName>
    </alternativeName>
</protein>
<sequence>MSKIVKIIGREIIDSRGNPTVEAEVHLEGGFVGMAAAPSGASTGSREALELRDGDKSRFLGKGVTKAVAAVNGPIAQALIGKDAKDQAGIDKIMIDLDGTENKSKFGANAILAVSLANAKAAAAAKGMPLYEHIAELNGTPGKYSMPVPMMNIINGGEHADNNVDIQEFMIQPVGAKTVKEAIRMGSEVFHHLAKVLKAKGMNTAVGDEGGYAPNLGSNAEALAVIAEAVKAAGYELGKDITLAMDCAASEFYKDGKYVLAGEGNKAFTSEEFTHFLEELTKQYPIVSIEDGLDESDWDGFAYQTKVLGDKIQLVGDDLFVTNTKILKEGIEKGIANSILIKFNQIGSLTETLAAIKMAKDAGYTAVISHRSGETEDATIADLAVGTAAGQIKTGSMSRSDRVAKYNQLIRIEEALGEKAPYNGRKEIKGQA</sequence>
<keyword id="KW-0963">Cytoplasm</keyword>
<keyword id="KW-0324">Glycolysis</keyword>
<keyword id="KW-0456">Lyase</keyword>
<keyword id="KW-0460">Magnesium</keyword>
<keyword id="KW-0479">Metal-binding</keyword>
<keyword id="KW-0964">Secreted</keyword>
<reference key="1">
    <citation type="journal article" date="2009" name="PLoS Genet.">
        <title>Organised genome dynamics in the Escherichia coli species results in highly diverse adaptive paths.</title>
        <authorList>
            <person name="Touchon M."/>
            <person name="Hoede C."/>
            <person name="Tenaillon O."/>
            <person name="Barbe V."/>
            <person name="Baeriswyl S."/>
            <person name="Bidet P."/>
            <person name="Bingen E."/>
            <person name="Bonacorsi S."/>
            <person name="Bouchier C."/>
            <person name="Bouvet O."/>
            <person name="Calteau A."/>
            <person name="Chiapello H."/>
            <person name="Clermont O."/>
            <person name="Cruveiller S."/>
            <person name="Danchin A."/>
            <person name="Diard M."/>
            <person name="Dossat C."/>
            <person name="Karoui M.E."/>
            <person name="Frapy E."/>
            <person name="Garry L."/>
            <person name="Ghigo J.M."/>
            <person name="Gilles A.M."/>
            <person name="Johnson J."/>
            <person name="Le Bouguenec C."/>
            <person name="Lescat M."/>
            <person name="Mangenot S."/>
            <person name="Martinez-Jehanne V."/>
            <person name="Matic I."/>
            <person name="Nassif X."/>
            <person name="Oztas S."/>
            <person name="Petit M.A."/>
            <person name="Pichon C."/>
            <person name="Rouy Z."/>
            <person name="Ruf C.S."/>
            <person name="Schneider D."/>
            <person name="Tourret J."/>
            <person name="Vacherie B."/>
            <person name="Vallenet D."/>
            <person name="Medigue C."/>
            <person name="Rocha E.P.C."/>
            <person name="Denamur E."/>
        </authorList>
    </citation>
    <scope>NUCLEOTIDE SEQUENCE [LARGE SCALE GENOMIC DNA]</scope>
    <source>
        <strain>ATCC 35469 / DSM 13698 / BCRC 15582 / CCUG 18766 / IAM 14443 / JCM 21226 / LMG 7866 / NBRC 102419 / NCTC 12128 / CDC 0568-73</strain>
    </source>
</reference>
<comment type="function">
    <text evidence="1">Catalyzes the reversible conversion of 2-phosphoglycerate (2-PG) into phosphoenolpyruvate (PEP). It is essential for the degradation of carbohydrates via glycolysis.</text>
</comment>
<comment type="catalytic activity">
    <reaction evidence="1">
        <text>(2R)-2-phosphoglycerate = phosphoenolpyruvate + H2O</text>
        <dbReference type="Rhea" id="RHEA:10164"/>
        <dbReference type="ChEBI" id="CHEBI:15377"/>
        <dbReference type="ChEBI" id="CHEBI:58289"/>
        <dbReference type="ChEBI" id="CHEBI:58702"/>
        <dbReference type="EC" id="4.2.1.11"/>
    </reaction>
</comment>
<comment type="cofactor">
    <cofactor evidence="1">
        <name>Mg(2+)</name>
        <dbReference type="ChEBI" id="CHEBI:18420"/>
    </cofactor>
    <text evidence="1">Binds a second Mg(2+) ion via substrate during catalysis.</text>
</comment>
<comment type="pathway">
    <text evidence="1">Carbohydrate degradation; glycolysis; pyruvate from D-glyceraldehyde 3-phosphate: step 4/5.</text>
</comment>
<comment type="subunit">
    <text evidence="1">Component of the RNA degradosome, a multiprotein complex involved in RNA processing and mRNA degradation.</text>
</comment>
<comment type="subcellular location">
    <subcellularLocation>
        <location evidence="1">Cytoplasm</location>
    </subcellularLocation>
    <subcellularLocation>
        <location evidence="1">Secreted</location>
    </subcellularLocation>
    <subcellularLocation>
        <location evidence="1">Cell surface</location>
    </subcellularLocation>
    <text evidence="1">Fractions of enolase are present in both the cytoplasm and on the cell surface.</text>
</comment>
<comment type="similarity">
    <text evidence="1">Belongs to the enolase family.</text>
</comment>
<dbReference type="EC" id="4.2.1.11" evidence="1"/>
<dbReference type="EMBL" id="CU928158">
    <property type="protein sequence ID" value="CAQ87853.1"/>
    <property type="molecule type" value="Genomic_DNA"/>
</dbReference>
<dbReference type="RefSeq" id="WP_000036723.1">
    <property type="nucleotide sequence ID" value="NC_011740.1"/>
</dbReference>
<dbReference type="SMR" id="B7LWP5"/>
<dbReference type="GeneID" id="93779219"/>
<dbReference type="KEGG" id="efe:EFER_0285"/>
<dbReference type="HOGENOM" id="CLU_031223_2_1_6"/>
<dbReference type="OrthoDB" id="9804716at2"/>
<dbReference type="UniPathway" id="UPA00109">
    <property type="reaction ID" value="UER00187"/>
</dbReference>
<dbReference type="Proteomes" id="UP000000745">
    <property type="component" value="Chromosome"/>
</dbReference>
<dbReference type="GO" id="GO:0009986">
    <property type="term" value="C:cell surface"/>
    <property type="evidence" value="ECO:0007669"/>
    <property type="project" value="UniProtKB-SubCell"/>
</dbReference>
<dbReference type="GO" id="GO:0005576">
    <property type="term" value="C:extracellular region"/>
    <property type="evidence" value="ECO:0007669"/>
    <property type="project" value="UniProtKB-SubCell"/>
</dbReference>
<dbReference type="GO" id="GO:0000015">
    <property type="term" value="C:phosphopyruvate hydratase complex"/>
    <property type="evidence" value="ECO:0007669"/>
    <property type="project" value="InterPro"/>
</dbReference>
<dbReference type="GO" id="GO:0000287">
    <property type="term" value="F:magnesium ion binding"/>
    <property type="evidence" value="ECO:0007669"/>
    <property type="project" value="UniProtKB-UniRule"/>
</dbReference>
<dbReference type="GO" id="GO:0004634">
    <property type="term" value="F:phosphopyruvate hydratase activity"/>
    <property type="evidence" value="ECO:0007669"/>
    <property type="project" value="UniProtKB-UniRule"/>
</dbReference>
<dbReference type="GO" id="GO:0006096">
    <property type="term" value="P:glycolytic process"/>
    <property type="evidence" value="ECO:0007669"/>
    <property type="project" value="UniProtKB-UniRule"/>
</dbReference>
<dbReference type="CDD" id="cd03313">
    <property type="entry name" value="enolase"/>
    <property type="match status" value="1"/>
</dbReference>
<dbReference type="FunFam" id="3.20.20.120:FF:000001">
    <property type="entry name" value="Enolase"/>
    <property type="match status" value="1"/>
</dbReference>
<dbReference type="FunFam" id="3.30.390.10:FF:000001">
    <property type="entry name" value="Enolase"/>
    <property type="match status" value="1"/>
</dbReference>
<dbReference type="Gene3D" id="3.20.20.120">
    <property type="entry name" value="Enolase-like C-terminal domain"/>
    <property type="match status" value="1"/>
</dbReference>
<dbReference type="Gene3D" id="3.30.390.10">
    <property type="entry name" value="Enolase-like, N-terminal domain"/>
    <property type="match status" value="1"/>
</dbReference>
<dbReference type="HAMAP" id="MF_00318">
    <property type="entry name" value="Enolase"/>
    <property type="match status" value="1"/>
</dbReference>
<dbReference type="InterPro" id="IPR000941">
    <property type="entry name" value="Enolase"/>
</dbReference>
<dbReference type="InterPro" id="IPR036849">
    <property type="entry name" value="Enolase-like_C_sf"/>
</dbReference>
<dbReference type="InterPro" id="IPR029017">
    <property type="entry name" value="Enolase-like_N"/>
</dbReference>
<dbReference type="InterPro" id="IPR020810">
    <property type="entry name" value="Enolase_C"/>
</dbReference>
<dbReference type="InterPro" id="IPR020809">
    <property type="entry name" value="Enolase_CS"/>
</dbReference>
<dbReference type="InterPro" id="IPR020811">
    <property type="entry name" value="Enolase_N"/>
</dbReference>
<dbReference type="NCBIfam" id="TIGR01060">
    <property type="entry name" value="eno"/>
    <property type="match status" value="1"/>
</dbReference>
<dbReference type="PANTHER" id="PTHR11902">
    <property type="entry name" value="ENOLASE"/>
    <property type="match status" value="1"/>
</dbReference>
<dbReference type="PANTHER" id="PTHR11902:SF1">
    <property type="entry name" value="ENOLASE"/>
    <property type="match status" value="1"/>
</dbReference>
<dbReference type="Pfam" id="PF00113">
    <property type="entry name" value="Enolase_C"/>
    <property type="match status" value="1"/>
</dbReference>
<dbReference type="Pfam" id="PF03952">
    <property type="entry name" value="Enolase_N"/>
    <property type="match status" value="1"/>
</dbReference>
<dbReference type="PIRSF" id="PIRSF001400">
    <property type="entry name" value="Enolase"/>
    <property type="match status" value="1"/>
</dbReference>
<dbReference type="PRINTS" id="PR00148">
    <property type="entry name" value="ENOLASE"/>
</dbReference>
<dbReference type="SFLD" id="SFLDS00001">
    <property type="entry name" value="Enolase"/>
    <property type="match status" value="1"/>
</dbReference>
<dbReference type="SFLD" id="SFLDF00002">
    <property type="entry name" value="enolase"/>
    <property type="match status" value="1"/>
</dbReference>
<dbReference type="SMART" id="SM01192">
    <property type="entry name" value="Enolase_C"/>
    <property type="match status" value="1"/>
</dbReference>
<dbReference type="SMART" id="SM01193">
    <property type="entry name" value="Enolase_N"/>
    <property type="match status" value="1"/>
</dbReference>
<dbReference type="SUPFAM" id="SSF51604">
    <property type="entry name" value="Enolase C-terminal domain-like"/>
    <property type="match status" value="1"/>
</dbReference>
<dbReference type="SUPFAM" id="SSF54826">
    <property type="entry name" value="Enolase N-terminal domain-like"/>
    <property type="match status" value="1"/>
</dbReference>
<dbReference type="PROSITE" id="PS00164">
    <property type="entry name" value="ENOLASE"/>
    <property type="match status" value="1"/>
</dbReference>
<feature type="chain" id="PRO_1000119577" description="Enolase">
    <location>
        <begin position="1"/>
        <end position="432"/>
    </location>
</feature>
<feature type="active site" description="Proton donor" evidence="1">
    <location>
        <position position="209"/>
    </location>
</feature>
<feature type="active site" description="Proton acceptor" evidence="1">
    <location>
        <position position="342"/>
    </location>
</feature>
<feature type="binding site" evidence="1">
    <location>
        <position position="167"/>
    </location>
    <ligand>
        <name>(2R)-2-phosphoglycerate</name>
        <dbReference type="ChEBI" id="CHEBI:58289"/>
    </ligand>
</feature>
<feature type="binding site" evidence="1">
    <location>
        <position position="246"/>
    </location>
    <ligand>
        <name>Mg(2+)</name>
        <dbReference type="ChEBI" id="CHEBI:18420"/>
    </ligand>
</feature>
<feature type="binding site" evidence="1">
    <location>
        <position position="290"/>
    </location>
    <ligand>
        <name>Mg(2+)</name>
        <dbReference type="ChEBI" id="CHEBI:18420"/>
    </ligand>
</feature>
<feature type="binding site" evidence="1">
    <location>
        <position position="317"/>
    </location>
    <ligand>
        <name>Mg(2+)</name>
        <dbReference type="ChEBI" id="CHEBI:18420"/>
    </ligand>
</feature>
<feature type="binding site" evidence="1">
    <location>
        <position position="342"/>
    </location>
    <ligand>
        <name>(2R)-2-phosphoglycerate</name>
        <dbReference type="ChEBI" id="CHEBI:58289"/>
    </ligand>
</feature>
<feature type="binding site" evidence="1">
    <location>
        <position position="371"/>
    </location>
    <ligand>
        <name>(2R)-2-phosphoglycerate</name>
        <dbReference type="ChEBI" id="CHEBI:58289"/>
    </ligand>
</feature>
<feature type="binding site" evidence="1">
    <location>
        <position position="372"/>
    </location>
    <ligand>
        <name>(2R)-2-phosphoglycerate</name>
        <dbReference type="ChEBI" id="CHEBI:58289"/>
    </ligand>
</feature>
<feature type="binding site" evidence="1">
    <location>
        <position position="393"/>
    </location>
    <ligand>
        <name>(2R)-2-phosphoglycerate</name>
        <dbReference type="ChEBI" id="CHEBI:58289"/>
    </ligand>
</feature>
<gene>
    <name evidence="1" type="primary">eno</name>
    <name type="ordered locus">EFER_0285</name>
</gene>
<evidence type="ECO:0000255" key="1">
    <source>
        <dbReference type="HAMAP-Rule" id="MF_00318"/>
    </source>
</evidence>
<name>ENO_ESCF3</name>
<organism>
    <name type="scientific">Escherichia fergusonii (strain ATCC 35469 / DSM 13698 / CCUG 18766 / IAM 14443 / JCM 21226 / LMG 7866 / NBRC 102419 / NCTC 12128 / CDC 0568-73)</name>
    <dbReference type="NCBI Taxonomy" id="585054"/>
    <lineage>
        <taxon>Bacteria</taxon>
        <taxon>Pseudomonadati</taxon>
        <taxon>Pseudomonadota</taxon>
        <taxon>Gammaproteobacteria</taxon>
        <taxon>Enterobacterales</taxon>
        <taxon>Enterobacteriaceae</taxon>
        <taxon>Escherichia</taxon>
    </lineage>
</organism>